<reference key="1">
    <citation type="journal article" date="2010" name="PLoS ONE">
        <title>Genome sequence of Cronobacter sakazakii BAA-894 and comparative genomic hybridization analysis with other Cronobacter species.</title>
        <authorList>
            <person name="Kucerova E."/>
            <person name="Clifton S.W."/>
            <person name="Xia X.Q."/>
            <person name="Long F."/>
            <person name="Porwollik S."/>
            <person name="Fulton L."/>
            <person name="Fronick C."/>
            <person name="Minx P."/>
            <person name="Kyung K."/>
            <person name="Warren W."/>
            <person name="Fulton R."/>
            <person name="Feng D."/>
            <person name="Wollam A."/>
            <person name="Shah N."/>
            <person name="Bhonagiri V."/>
            <person name="Nash W.E."/>
            <person name="Hallsworth-Pepin K."/>
            <person name="Wilson R.K."/>
            <person name="McClelland M."/>
            <person name="Forsythe S.J."/>
        </authorList>
    </citation>
    <scope>NUCLEOTIDE SEQUENCE [LARGE SCALE GENOMIC DNA]</scope>
    <source>
        <strain>ATCC BAA-894</strain>
    </source>
</reference>
<protein>
    <recommendedName>
        <fullName evidence="1">Ribosome maturation factor RimP</fullName>
    </recommendedName>
</protein>
<gene>
    <name evidence="1" type="primary">rimP</name>
    <name type="ordered locus">ESA_03563</name>
</gene>
<name>RIMP_CROS8</name>
<keyword id="KW-0963">Cytoplasm</keyword>
<keyword id="KW-1185">Reference proteome</keyword>
<keyword id="KW-0690">Ribosome biogenesis</keyword>
<proteinExistence type="inferred from homology"/>
<organism>
    <name type="scientific">Cronobacter sakazakii (strain ATCC BAA-894)</name>
    <name type="common">Enterobacter sakazakii</name>
    <dbReference type="NCBI Taxonomy" id="290339"/>
    <lineage>
        <taxon>Bacteria</taxon>
        <taxon>Pseudomonadati</taxon>
        <taxon>Pseudomonadota</taxon>
        <taxon>Gammaproteobacteria</taxon>
        <taxon>Enterobacterales</taxon>
        <taxon>Enterobacteriaceae</taxon>
        <taxon>Cronobacter</taxon>
    </lineage>
</organism>
<comment type="function">
    <text evidence="1">Required for maturation of 30S ribosomal subunits.</text>
</comment>
<comment type="subcellular location">
    <subcellularLocation>
        <location evidence="1">Cytoplasm</location>
    </subcellularLocation>
</comment>
<comment type="similarity">
    <text evidence="1">Belongs to the RimP family.</text>
</comment>
<dbReference type="EMBL" id="CP000783">
    <property type="protein sequence ID" value="ABU78776.1"/>
    <property type="molecule type" value="Genomic_DNA"/>
</dbReference>
<dbReference type="SMR" id="A7MQE3"/>
<dbReference type="KEGG" id="esa:ESA_03563"/>
<dbReference type="HOGENOM" id="CLU_070525_1_1_6"/>
<dbReference type="Proteomes" id="UP000000260">
    <property type="component" value="Chromosome"/>
</dbReference>
<dbReference type="GO" id="GO:0005829">
    <property type="term" value="C:cytosol"/>
    <property type="evidence" value="ECO:0007669"/>
    <property type="project" value="TreeGrafter"/>
</dbReference>
<dbReference type="GO" id="GO:0000028">
    <property type="term" value="P:ribosomal small subunit assembly"/>
    <property type="evidence" value="ECO:0007669"/>
    <property type="project" value="TreeGrafter"/>
</dbReference>
<dbReference type="GO" id="GO:0006412">
    <property type="term" value="P:translation"/>
    <property type="evidence" value="ECO:0007669"/>
    <property type="project" value="TreeGrafter"/>
</dbReference>
<dbReference type="CDD" id="cd01734">
    <property type="entry name" value="YlxS_C"/>
    <property type="match status" value="1"/>
</dbReference>
<dbReference type="FunFam" id="2.30.30.180:FF:000001">
    <property type="entry name" value="Ribosome maturation factor RimP"/>
    <property type="match status" value="1"/>
</dbReference>
<dbReference type="FunFam" id="3.30.300.70:FF:000001">
    <property type="entry name" value="Ribosome maturation factor RimP"/>
    <property type="match status" value="1"/>
</dbReference>
<dbReference type="Gene3D" id="2.30.30.180">
    <property type="entry name" value="Ribosome maturation factor RimP, C-terminal domain"/>
    <property type="match status" value="1"/>
</dbReference>
<dbReference type="Gene3D" id="3.30.300.70">
    <property type="entry name" value="RimP-like superfamily, N-terminal"/>
    <property type="match status" value="1"/>
</dbReference>
<dbReference type="HAMAP" id="MF_01077">
    <property type="entry name" value="RimP"/>
    <property type="match status" value="1"/>
</dbReference>
<dbReference type="InterPro" id="IPR003728">
    <property type="entry name" value="Ribosome_maturation_RimP"/>
</dbReference>
<dbReference type="InterPro" id="IPR028998">
    <property type="entry name" value="RimP_C"/>
</dbReference>
<dbReference type="InterPro" id="IPR036847">
    <property type="entry name" value="RimP_C_sf"/>
</dbReference>
<dbReference type="InterPro" id="IPR028989">
    <property type="entry name" value="RimP_N"/>
</dbReference>
<dbReference type="InterPro" id="IPR035956">
    <property type="entry name" value="RimP_N_sf"/>
</dbReference>
<dbReference type="NCBIfam" id="NF000927">
    <property type="entry name" value="PRK00092.1-1"/>
    <property type="match status" value="1"/>
</dbReference>
<dbReference type="PANTHER" id="PTHR33867">
    <property type="entry name" value="RIBOSOME MATURATION FACTOR RIMP"/>
    <property type="match status" value="1"/>
</dbReference>
<dbReference type="PANTHER" id="PTHR33867:SF1">
    <property type="entry name" value="RIBOSOME MATURATION FACTOR RIMP"/>
    <property type="match status" value="1"/>
</dbReference>
<dbReference type="Pfam" id="PF17384">
    <property type="entry name" value="DUF150_C"/>
    <property type="match status" value="1"/>
</dbReference>
<dbReference type="Pfam" id="PF02576">
    <property type="entry name" value="RimP_N"/>
    <property type="match status" value="1"/>
</dbReference>
<dbReference type="SUPFAM" id="SSF74942">
    <property type="entry name" value="YhbC-like, C-terminal domain"/>
    <property type="match status" value="1"/>
</dbReference>
<dbReference type="SUPFAM" id="SSF75420">
    <property type="entry name" value="YhbC-like, N-terminal domain"/>
    <property type="match status" value="1"/>
</dbReference>
<sequence>MPFFYVPGVGLSTLEQKLTEMITAPVEALGYELVGIEFIRGRTSTLRIYIDSEDGITVDDCADVSHQVSSVLDVEDPITVAYNLEVSSPGLDRPLFTAEHYARYTGEEVTLVLRMAVQNRRKWQGIIKAVDGEMITVAVDGKDEVFALSNIQRANLVPQF</sequence>
<evidence type="ECO:0000255" key="1">
    <source>
        <dbReference type="HAMAP-Rule" id="MF_01077"/>
    </source>
</evidence>
<feature type="chain" id="PRO_0000384646" description="Ribosome maturation factor RimP">
    <location>
        <begin position="1"/>
        <end position="160"/>
    </location>
</feature>
<accession>A7MQE3</accession>